<dbReference type="EMBL" id="AE015925">
    <property type="protein sequence ID" value="AAP05304.1"/>
    <property type="molecule type" value="Genomic_DNA"/>
</dbReference>
<dbReference type="RefSeq" id="WP_011006519.1">
    <property type="nucleotide sequence ID" value="NC_003361.3"/>
</dbReference>
<dbReference type="SMR" id="Q822W7"/>
<dbReference type="STRING" id="227941.CCA_00562"/>
<dbReference type="KEGG" id="cca:CCA_00562"/>
<dbReference type="eggNOG" id="COG2973">
    <property type="taxonomic scope" value="Bacteria"/>
</dbReference>
<dbReference type="HOGENOM" id="CLU_147939_0_2_0"/>
<dbReference type="OrthoDB" id="370734at2"/>
<dbReference type="Proteomes" id="UP000002193">
    <property type="component" value="Chromosome"/>
</dbReference>
<dbReference type="GO" id="GO:0005737">
    <property type="term" value="C:cytoplasm"/>
    <property type="evidence" value="ECO:0007669"/>
    <property type="project" value="UniProtKB-SubCell"/>
</dbReference>
<dbReference type="GO" id="GO:0003700">
    <property type="term" value="F:DNA-binding transcription factor activity"/>
    <property type="evidence" value="ECO:0007669"/>
    <property type="project" value="InterPro"/>
</dbReference>
<dbReference type="GO" id="GO:0043565">
    <property type="term" value="F:sequence-specific DNA binding"/>
    <property type="evidence" value="ECO:0007669"/>
    <property type="project" value="InterPro"/>
</dbReference>
<dbReference type="GO" id="GO:0045892">
    <property type="term" value="P:negative regulation of DNA-templated transcription"/>
    <property type="evidence" value="ECO:0007669"/>
    <property type="project" value="UniProtKB-UniRule"/>
</dbReference>
<dbReference type="Gene3D" id="1.10.1270.10">
    <property type="entry name" value="TrpR-like"/>
    <property type="match status" value="1"/>
</dbReference>
<dbReference type="HAMAP" id="MF_00475">
    <property type="entry name" value="Trp_repressor"/>
    <property type="match status" value="1"/>
</dbReference>
<dbReference type="InterPro" id="IPR000831">
    <property type="entry name" value="Trp_repress"/>
</dbReference>
<dbReference type="InterPro" id="IPR013335">
    <property type="entry name" value="Trp_repress_bac"/>
</dbReference>
<dbReference type="InterPro" id="IPR010921">
    <property type="entry name" value="Trp_repressor/repl_initiator"/>
</dbReference>
<dbReference type="InterPro" id="IPR038116">
    <property type="entry name" value="TrpR-like_sf"/>
</dbReference>
<dbReference type="NCBIfam" id="TIGR01321">
    <property type="entry name" value="TrpR"/>
    <property type="match status" value="1"/>
</dbReference>
<dbReference type="PANTHER" id="PTHR38025">
    <property type="entry name" value="TRP OPERON REPRESSOR"/>
    <property type="match status" value="1"/>
</dbReference>
<dbReference type="PANTHER" id="PTHR38025:SF1">
    <property type="entry name" value="TRP OPERON REPRESSOR"/>
    <property type="match status" value="1"/>
</dbReference>
<dbReference type="Pfam" id="PF01371">
    <property type="entry name" value="Trp_repressor"/>
    <property type="match status" value="1"/>
</dbReference>
<dbReference type="PIRSF" id="PIRSF003196">
    <property type="entry name" value="Trp_repressor"/>
    <property type="match status" value="1"/>
</dbReference>
<dbReference type="SUPFAM" id="SSF48295">
    <property type="entry name" value="TrpR-like"/>
    <property type="match status" value="1"/>
</dbReference>
<evidence type="ECO:0000255" key="1">
    <source>
        <dbReference type="HAMAP-Rule" id="MF_00475"/>
    </source>
</evidence>
<reference key="1">
    <citation type="journal article" date="2003" name="Nucleic Acids Res.">
        <title>Genome sequence of Chlamydophila caviae (Chlamydia psittaci GPIC): examining the role of niche-specific genes in the evolution of the Chlamydiaceae.</title>
        <authorList>
            <person name="Read T.D."/>
            <person name="Myers G.S.A."/>
            <person name="Brunham R.C."/>
            <person name="Nelson W.C."/>
            <person name="Paulsen I.T."/>
            <person name="Heidelberg J.F."/>
            <person name="Holtzapple E.K."/>
            <person name="Khouri H.M."/>
            <person name="Federova N.B."/>
            <person name="Carty H.A."/>
            <person name="Umayam L.A."/>
            <person name="Haft D.H."/>
            <person name="Peterson J.D."/>
            <person name="Beanan M.J."/>
            <person name="White O."/>
            <person name="Salzberg S.L."/>
            <person name="Hsia R.-C."/>
            <person name="McClarty G."/>
            <person name="Rank R.G."/>
            <person name="Bavoil P.M."/>
            <person name="Fraser C.M."/>
        </authorList>
    </citation>
    <scope>NUCLEOTIDE SEQUENCE [LARGE SCALE GENOMIC DNA]</scope>
    <source>
        <strain>ATCC VR-813 / DSM 19441 / 03DC25 / GPIC</strain>
    </source>
</reference>
<name>TRPR_CHLCV</name>
<keyword id="KW-0963">Cytoplasm</keyword>
<keyword id="KW-0238">DNA-binding</keyword>
<keyword id="KW-0678">Repressor</keyword>
<keyword id="KW-0804">Transcription</keyword>
<keyword id="KW-0805">Transcription regulation</keyword>
<gene>
    <name evidence="1" type="primary">trpR</name>
    <name type="ordered locus">CCA_00562</name>
</gene>
<sequence>MAQESNENGWGDFLELCSKIKTPEAFHDFFALFLTFGERESMASRFLIVQALLAEQLTQREIAQKYGVSIAQITRGSNALKAIDPKFKEFLKNLNRKYGNQ</sequence>
<proteinExistence type="inferred from homology"/>
<comment type="function">
    <text evidence="1">This protein is an aporepressor. When complexed with L-tryptophan it binds the operator region of the trp operon and prevents the initiation of transcription.</text>
</comment>
<comment type="subunit">
    <text evidence="1">Homodimer.</text>
</comment>
<comment type="subcellular location">
    <subcellularLocation>
        <location evidence="1">Cytoplasm</location>
    </subcellularLocation>
</comment>
<comment type="similarity">
    <text evidence="1">Belongs to the TrpR family.</text>
</comment>
<feature type="chain" id="PRO_0000196507" description="Trp operon repressor homolog">
    <location>
        <begin position="1"/>
        <end position="101"/>
    </location>
</feature>
<feature type="DNA-binding region" evidence="1">
    <location>
        <begin position="59"/>
        <end position="82"/>
    </location>
</feature>
<accession>Q822W7</accession>
<protein>
    <recommendedName>
        <fullName evidence="1">Trp operon repressor homolog</fullName>
    </recommendedName>
</protein>
<organism>
    <name type="scientific">Chlamydia caviae (strain ATCC VR-813 / DSM 19441 / 03DC25 / GPIC)</name>
    <name type="common">Chlamydophila caviae</name>
    <dbReference type="NCBI Taxonomy" id="227941"/>
    <lineage>
        <taxon>Bacteria</taxon>
        <taxon>Pseudomonadati</taxon>
        <taxon>Chlamydiota</taxon>
        <taxon>Chlamydiia</taxon>
        <taxon>Chlamydiales</taxon>
        <taxon>Chlamydiaceae</taxon>
        <taxon>Chlamydia/Chlamydophila group</taxon>
        <taxon>Chlamydia</taxon>
    </lineage>
</organism>